<sequence length="1214" mass="133506">MLLFLILLLPVVLKFSFVSLSAPARWNCPEGSPSGNGNATCVGPAPFLIFSHGNSIFRIDLEGTNHEQLVADAGISVLMDFHYNEERIYWVDLERQLLQRVFLNGTRQEKVCNLEKNVSGMAINWINEELIWSNQQEGTITVTDMKGNNSRVLLSALKYPANVAVDPVERLMFWSSVVAGSLHRADVTGVEVRLLLETSEEIAAVSLDVLDKRLFWIQYNREGGSSRICSCDYDGGSVHFSKHLTQHNVFAMSLFGDHIFYSTWKKKTIWVANKHTGKDMVKMNLNPAFVPPGGIKVVHPLVQPKAEGDAWASDQKLCKLRKGNCRGSMCGQEPKSHVCTCAEGYTLSQDGRKCEDVNECAFWNHGCTLGCENTPGSYYCTCPAGFVLLPDGKRCHQLISCPSNVSECSHDCVLTSDGPICFCPEDSVLEADGKTCSGCSSPDNGGCSQLCLPLSPVTWECGCFPGYDLQLDKKSCRASGPPPFLLFANSQDIRHMHFDGTDYETLLNQQIGMVLALDHDPVENKVYFAHTALKWIERANMDGSQRERLFEEAVDVPEGLAIDWIGRKFYWTDRGRSLIEGSDLNGKYREIIIKEDISQPRGIAVHPVAKRLFWTDMGTNPRIESSSLQGIGRQVIASSDLVWPSGITIDYLTDKLYWCDAKQSVIEMSNLDGSRRQRLAQNDVGHPFAVAVFEDHVWFSDWTMPSVIRVNKRTGKNRVRLRGSMLKPSSLVVVHPLAKPGTNPCLHQNGGCEHICKESFGTAQCLCHEGFLKAPDGKMCLALNGQEILAGRGKDLSDGVMPVDTLPRSRELEDNLTESQHILVAEIMVSDDEDCGAAGCSAQARCVTEGEDATCQCLKGFAGDGNLCSDIDECELGTSVCPPTSSECINTEGGHVCRCSEGYQGDGIHCLDIDECQLGVHTCGENATCTNTEGNYTCTCAGRPSEPGRICPDPTPPSHLGEDGRYSVRNSYSECPPSHDGYCLHGGVCMYIEAVDSYACNCVFGYVGERCQHRDLKWWELRHAGLGRQWNVTVVAVCVVVLVLLLLLGLWGAHYYRTQKLLSKNPKNPYEESGRDVSGIRPADGEAGMSSCPQPWFVVIKEHQNLRNGSQPGAPKDGLGADVGQFSSLEPGSLQPTSWRKEPQMYMDTEQGCCIPSSSDKGSGPQGIGYSFHLPSYGARSIAVGVEKSHSLLSANPLRQQRAPDPPHQMELTQ</sequence>
<keyword id="KW-0903">Direct protein sequencing</keyword>
<keyword id="KW-1015">Disulfide bond</keyword>
<keyword id="KW-0245">EGF-like domain</keyword>
<keyword id="KW-0325">Glycoprotein</keyword>
<keyword id="KW-0339">Growth factor</keyword>
<keyword id="KW-0472">Membrane</keyword>
<keyword id="KW-1185">Reference proteome</keyword>
<keyword id="KW-0677">Repeat</keyword>
<keyword id="KW-0732">Signal</keyword>
<keyword id="KW-0812">Transmembrane</keyword>
<keyword id="KW-1133">Transmembrane helix</keyword>
<feature type="signal peptide" evidence="2">
    <location>
        <begin position="1"/>
        <end position="22"/>
    </location>
</feature>
<feature type="chain" id="PRO_0000007544" description="Pro-epidermal growth factor">
    <location>
        <begin position="23"/>
        <end position="1214"/>
    </location>
</feature>
<feature type="chain" id="PRO_0000007545" description="Epidermal growth factor">
    <location>
        <begin position="970"/>
        <end position="1022"/>
    </location>
</feature>
<feature type="topological domain" description="Extracellular" evidence="2">
    <location>
        <begin position="23"/>
        <end position="1031"/>
    </location>
</feature>
<feature type="transmembrane region" description="Helical" evidence="2">
    <location>
        <begin position="1032"/>
        <end position="1051"/>
    </location>
</feature>
<feature type="topological domain" description="Cytoplasmic" evidence="2">
    <location>
        <begin position="1052"/>
        <end position="1214"/>
    </location>
</feature>
<feature type="repeat" description="LDL-receptor class B 1">
    <location>
        <begin position="86"/>
        <end position="127"/>
    </location>
</feature>
<feature type="repeat" description="LDL-receptor class B 2">
    <location>
        <begin position="128"/>
        <end position="169"/>
    </location>
</feature>
<feature type="repeat" description="LDL-receptor class B 3">
    <location>
        <begin position="170"/>
        <end position="211"/>
    </location>
</feature>
<feature type="repeat" description="LDL-receptor class B 4">
    <location>
        <begin position="212"/>
        <end position="258"/>
    </location>
</feature>
<feature type="domain" description="EGF-like 1" evidence="3">
    <location>
        <begin position="314"/>
        <end position="355"/>
    </location>
</feature>
<feature type="domain" description="EGF-like 2; calcium-binding" evidence="3">
    <location>
        <begin position="356"/>
        <end position="396"/>
    </location>
</feature>
<feature type="domain" description="EGF-like 3" evidence="3">
    <location>
        <begin position="397"/>
        <end position="437"/>
    </location>
</feature>
<feature type="domain" description="EGF-like 4" evidence="3">
    <location>
        <begin position="435"/>
        <end position="477"/>
    </location>
</feature>
<feature type="repeat" description="LDL-receptor class B 5">
    <location>
        <begin position="483"/>
        <end position="523"/>
    </location>
</feature>
<feature type="repeat" description="LDL-receptor class B 6">
    <location>
        <begin position="524"/>
        <end position="566"/>
    </location>
</feature>
<feature type="repeat" description="LDL-receptor class B 7">
    <location>
        <begin position="567"/>
        <end position="609"/>
    </location>
</feature>
<feature type="repeat" description="LDL-receptor class B 8">
    <location>
        <begin position="610"/>
        <end position="653"/>
    </location>
</feature>
<feature type="repeat" description="LDL-receptor class B 9">
    <location>
        <begin position="654"/>
        <end position="696"/>
    </location>
</feature>
<feature type="domain" description="EGF-like 5" evidence="3">
    <location>
        <begin position="741"/>
        <end position="781"/>
    </location>
</feature>
<feature type="domain" description="EGF-like 6" evidence="3">
    <location>
        <begin position="832"/>
        <end position="869"/>
    </location>
</feature>
<feature type="domain" description="EGF-like 7; calcium-binding" evidence="3">
    <location>
        <begin position="870"/>
        <end position="911"/>
    </location>
</feature>
<feature type="domain" description="EGF-like 8; calcium-binding" evidence="3">
    <location>
        <begin position="912"/>
        <end position="952"/>
    </location>
</feature>
<feature type="domain" description="EGF-like 9" evidence="3">
    <location>
        <begin position="971"/>
        <end position="1012"/>
    </location>
</feature>
<feature type="region of interest" description="Disordered" evidence="4">
    <location>
        <begin position="1193"/>
        <end position="1214"/>
    </location>
</feature>
<feature type="glycosylation site" description="N-linked (GlcNAc...) asparagine" evidence="2">
    <location>
        <position position="38"/>
    </location>
</feature>
<feature type="glycosylation site" description="N-linked (GlcNAc...) asparagine" evidence="2">
    <location>
        <position position="104"/>
    </location>
</feature>
<feature type="glycosylation site" description="N-linked (GlcNAc...) asparagine" evidence="2">
    <location>
        <position position="117"/>
    </location>
</feature>
<feature type="glycosylation site" description="N-linked (GlcNAc...) asparagine" evidence="2">
    <location>
        <position position="148"/>
    </location>
</feature>
<feature type="glycosylation site" description="N-linked (GlcNAc...) asparagine" evidence="2">
    <location>
        <position position="404"/>
    </location>
</feature>
<feature type="glycosylation site" description="N-linked (GlcNAc...) asparagine" evidence="2">
    <location>
        <position position="815"/>
    </location>
</feature>
<feature type="glycosylation site" description="N-linked (GlcNAc...) asparagine" evidence="2">
    <location>
        <position position="926"/>
    </location>
</feature>
<feature type="disulfide bond" evidence="3">
    <location>
        <begin position="360"/>
        <end position="371"/>
    </location>
</feature>
<feature type="disulfide bond" evidence="3">
    <location>
        <begin position="367"/>
        <end position="380"/>
    </location>
</feature>
<feature type="disulfide bond" evidence="3">
    <location>
        <begin position="382"/>
        <end position="395"/>
    </location>
</feature>
<feature type="disulfide bond" evidence="3">
    <location>
        <begin position="401"/>
        <end position="412"/>
    </location>
</feature>
<feature type="disulfide bond" evidence="3">
    <location>
        <begin position="408"/>
        <end position="421"/>
    </location>
</feature>
<feature type="disulfide bond" evidence="3">
    <location>
        <begin position="423"/>
        <end position="436"/>
    </location>
</feature>
<feature type="disulfide bond" evidence="3">
    <location>
        <begin position="439"/>
        <end position="451"/>
    </location>
</feature>
<feature type="disulfide bond" evidence="3">
    <location>
        <begin position="447"/>
        <end position="461"/>
    </location>
</feature>
<feature type="disulfide bond" evidence="3">
    <location>
        <begin position="463"/>
        <end position="476"/>
    </location>
</feature>
<feature type="disulfide bond" evidence="3">
    <location>
        <begin position="745"/>
        <end position="756"/>
    </location>
</feature>
<feature type="disulfide bond" evidence="3">
    <location>
        <begin position="752"/>
        <end position="765"/>
    </location>
</feature>
<feature type="disulfide bond" evidence="3">
    <location>
        <begin position="767"/>
        <end position="780"/>
    </location>
</feature>
<feature type="disulfide bond" evidence="3">
    <location>
        <begin position="835"/>
        <end position="846"/>
    </location>
</feature>
<feature type="disulfide bond" evidence="3">
    <location>
        <begin position="840"/>
        <end position="855"/>
    </location>
</feature>
<feature type="disulfide bond" evidence="3">
    <location>
        <begin position="857"/>
        <end position="868"/>
    </location>
</feature>
<feature type="disulfide bond" evidence="3">
    <location>
        <begin position="874"/>
        <end position="888"/>
    </location>
</feature>
<feature type="disulfide bond" evidence="3">
    <location>
        <begin position="881"/>
        <end position="897"/>
    </location>
</feature>
<feature type="disulfide bond" evidence="3">
    <location>
        <begin position="899"/>
        <end position="910"/>
    </location>
</feature>
<feature type="disulfide bond" evidence="3">
    <location>
        <begin position="916"/>
        <end position="929"/>
    </location>
</feature>
<feature type="disulfide bond" evidence="3">
    <location>
        <begin position="923"/>
        <end position="938"/>
    </location>
</feature>
<feature type="disulfide bond" evidence="3">
    <location>
        <begin position="940"/>
        <end position="951"/>
    </location>
</feature>
<feature type="disulfide bond" evidence="3">
    <location>
        <begin position="975"/>
        <end position="989"/>
    </location>
</feature>
<feature type="disulfide bond" evidence="3">
    <location>
        <begin position="983"/>
        <end position="1000"/>
    </location>
</feature>
<feature type="disulfide bond" evidence="3">
    <location>
        <begin position="1002"/>
        <end position="1011"/>
    </location>
</feature>
<feature type="sequence conflict" description="In Ref. 2; AAC14024." evidence="5" ref="2">
    <original>Q</original>
    <variation>R</variation>
    <location>
        <position position="634"/>
    </location>
</feature>
<gene>
    <name type="primary">EGF</name>
</gene>
<reference key="1">
    <citation type="journal article" date="2001" name="Domest. Anim. Endocrinol.">
        <title>Characterization of uterine epidermal growth factor during early pregnancy in pigs.</title>
        <authorList>
            <person name="Kim J.G."/>
            <person name="Vallet J.L."/>
            <person name="Christenson R.K."/>
        </authorList>
    </citation>
    <scope>NUCLEOTIDE SEQUENCE [MRNA]</scope>
    <source>
        <tissue>Uterus</tissue>
    </source>
</reference>
<reference key="2">
    <citation type="journal article" date="1998" name="Scand. J. Clin. Lab. Invest.">
        <title>Pig epidermal growth factor precursor contains segments that are highly conserved among species.</title>
        <authorList>
            <person name="Jorgensen P.E."/>
            <person name="Jensen L.G."/>
            <person name="Sorensen B.S."/>
            <person name="Poulsen S.S."/>
            <person name="Nexo E."/>
        </authorList>
    </citation>
    <scope>NUCLEOTIDE SEQUENCE [MRNA] OF 389-962</scope>
    <source>
        <strain>Danish Landrace</strain>
    </source>
</reference>
<reference key="3">
    <citation type="journal article" date="1991" name="J. Mol. Endocrinol.">
        <title>Cloning and characterization of a gene encoding pig epidermal growth factor.</title>
        <authorList>
            <person name="Pascall J.C."/>
            <person name="Jones D.S.C."/>
            <person name="Doel S.M."/>
            <person name="Clements J.M."/>
            <person name="Hunter M."/>
            <person name="Fallon T."/>
            <person name="Edwards M."/>
            <person name="Brown K.D."/>
        </authorList>
    </citation>
    <scope>NUCLEOTIDE SEQUENCE [MRNA] OF 970-1022</scope>
    <scope>PARTIAL PROTEIN SEQUENCE</scope>
    <source>
        <tissue>Kidney</tissue>
    </source>
</reference>
<proteinExistence type="evidence at protein level"/>
<comment type="function">
    <text evidence="1">EGF stimulates the growth of various epidermal and epithelial tissues in vivo and in vitro and of some fibroblasts in cell culture. Magnesiotropic hormone that stimulates magnesium reabsorption in the renal distal convoluted tubule via engagement of EGFR and activation of the magnesium channel TRPM6 (By similarity).</text>
</comment>
<comment type="subunit">
    <text evidence="1">Interacts with EGFR and promotes EGFR dimerization. Interacts with RHBDF1; may retain EGF in the endoplasmic reticulum and regulates its degradation through the endoplasmic reticulum-associated degradation (ERAD) (By similarity). Interacts with RHBDF2 (By similarity).</text>
</comment>
<comment type="subcellular location">
    <subcellularLocation>
        <location>Membrane</location>
        <topology>Single-pass type I membrane protein</topology>
    </subcellularLocation>
</comment>
<evidence type="ECO:0000250" key="1"/>
<evidence type="ECO:0000255" key="2"/>
<evidence type="ECO:0000255" key="3">
    <source>
        <dbReference type="PROSITE-ProRule" id="PRU00076"/>
    </source>
</evidence>
<evidence type="ECO:0000256" key="4">
    <source>
        <dbReference type="SAM" id="MobiDB-lite"/>
    </source>
</evidence>
<evidence type="ECO:0000305" key="5"/>
<protein>
    <recommendedName>
        <fullName>Pro-epidermal growth factor</fullName>
        <shortName>EGF</shortName>
    </recommendedName>
    <component>
        <recommendedName>
            <fullName>Epidermal growth factor</fullName>
        </recommendedName>
    </component>
</protein>
<organism>
    <name type="scientific">Sus scrofa</name>
    <name type="common">Pig</name>
    <dbReference type="NCBI Taxonomy" id="9823"/>
    <lineage>
        <taxon>Eukaryota</taxon>
        <taxon>Metazoa</taxon>
        <taxon>Chordata</taxon>
        <taxon>Craniata</taxon>
        <taxon>Vertebrata</taxon>
        <taxon>Euteleostomi</taxon>
        <taxon>Mammalia</taxon>
        <taxon>Eutheria</taxon>
        <taxon>Laurasiatheria</taxon>
        <taxon>Artiodactyla</taxon>
        <taxon>Suina</taxon>
        <taxon>Suidae</taxon>
        <taxon>Sus</taxon>
    </lineage>
</organism>
<name>EGF_PIG</name>
<dbReference type="EMBL" id="AF336151">
    <property type="protein sequence ID" value="AAK18830.1"/>
    <property type="molecule type" value="mRNA"/>
</dbReference>
<dbReference type="EMBL" id="AF053364">
    <property type="protein sequence ID" value="AAC14024.1"/>
    <property type="molecule type" value="mRNA"/>
</dbReference>
<dbReference type="EMBL" id="X59516">
    <property type="protein sequence ID" value="CAA42102.1"/>
    <property type="molecule type" value="mRNA"/>
</dbReference>
<dbReference type="PIR" id="S17294">
    <property type="entry name" value="S17294"/>
</dbReference>
<dbReference type="RefSeq" id="NP_999185.1">
    <property type="nucleotide sequence ID" value="NM_214020.2"/>
</dbReference>
<dbReference type="SMR" id="Q00968"/>
<dbReference type="FunCoup" id="Q00968">
    <property type="interactions" value="428"/>
</dbReference>
<dbReference type="STRING" id="9823.ENSSSCP00000028117"/>
<dbReference type="GlyCosmos" id="Q00968">
    <property type="glycosylation" value="7 sites, No reported glycans"/>
</dbReference>
<dbReference type="GlyGen" id="Q00968">
    <property type="glycosylation" value="8 sites"/>
</dbReference>
<dbReference type="PaxDb" id="9823-ENSSSCP00000028117"/>
<dbReference type="PeptideAtlas" id="Q00968"/>
<dbReference type="GeneID" id="397083"/>
<dbReference type="KEGG" id="ssc:397083"/>
<dbReference type="CTD" id="1950"/>
<dbReference type="eggNOG" id="KOG1215">
    <property type="taxonomic scope" value="Eukaryota"/>
</dbReference>
<dbReference type="InParanoid" id="Q00968"/>
<dbReference type="OrthoDB" id="4062651at2759"/>
<dbReference type="Proteomes" id="UP000008227">
    <property type="component" value="Unplaced"/>
</dbReference>
<dbReference type="Proteomes" id="UP000314985">
    <property type="component" value="Unplaced"/>
</dbReference>
<dbReference type="Proteomes" id="UP000694570">
    <property type="component" value="Unplaced"/>
</dbReference>
<dbReference type="Proteomes" id="UP000694571">
    <property type="component" value="Unplaced"/>
</dbReference>
<dbReference type="Proteomes" id="UP000694720">
    <property type="component" value="Unplaced"/>
</dbReference>
<dbReference type="Proteomes" id="UP000694722">
    <property type="component" value="Unplaced"/>
</dbReference>
<dbReference type="Proteomes" id="UP000694723">
    <property type="component" value="Unplaced"/>
</dbReference>
<dbReference type="Proteomes" id="UP000694724">
    <property type="component" value="Unplaced"/>
</dbReference>
<dbReference type="Proteomes" id="UP000694725">
    <property type="component" value="Unplaced"/>
</dbReference>
<dbReference type="Proteomes" id="UP000694726">
    <property type="component" value="Unplaced"/>
</dbReference>
<dbReference type="Proteomes" id="UP000694727">
    <property type="component" value="Unplaced"/>
</dbReference>
<dbReference type="Proteomes" id="UP000694728">
    <property type="component" value="Unplaced"/>
</dbReference>
<dbReference type="GO" id="GO:0005886">
    <property type="term" value="C:plasma membrane"/>
    <property type="evidence" value="ECO:0000318"/>
    <property type="project" value="GO_Central"/>
</dbReference>
<dbReference type="GO" id="GO:0005509">
    <property type="term" value="F:calcium ion binding"/>
    <property type="evidence" value="ECO:0007669"/>
    <property type="project" value="InterPro"/>
</dbReference>
<dbReference type="GO" id="GO:0008083">
    <property type="term" value="F:growth factor activity"/>
    <property type="evidence" value="ECO:0000318"/>
    <property type="project" value="GO_Central"/>
</dbReference>
<dbReference type="GO" id="GO:0007173">
    <property type="term" value="P:epidermal growth factor receptor signaling pathway"/>
    <property type="evidence" value="ECO:0000318"/>
    <property type="project" value="GO_Central"/>
</dbReference>
<dbReference type="GO" id="GO:0008284">
    <property type="term" value="P:positive regulation of cell population proliferation"/>
    <property type="evidence" value="ECO:0000250"/>
    <property type="project" value="UniProtKB"/>
</dbReference>
<dbReference type="GO" id="GO:0043388">
    <property type="term" value="P:positive regulation of DNA binding"/>
    <property type="evidence" value="ECO:0000250"/>
    <property type="project" value="UniProtKB"/>
</dbReference>
<dbReference type="GO" id="GO:0043410">
    <property type="term" value="P:positive regulation of MAPK cascade"/>
    <property type="evidence" value="ECO:0000250"/>
    <property type="project" value="UniProtKB"/>
</dbReference>
<dbReference type="GO" id="GO:0046425">
    <property type="term" value="P:regulation of receptor signaling pathway via JAK-STAT"/>
    <property type="evidence" value="ECO:0000250"/>
    <property type="project" value="UniProtKB"/>
</dbReference>
<dbReference type="CDD" id="cd00054">
    <property type="entry name" value="EGF_CA"/>
    <property type="match status" value="2"/>
</dbReference>
<dbReference type="FunFam" id="2.10.25.10:FF:000010">
    <property type="entry name" value="Pro-epidermal growth factor"/>
    <property type="match status" value="1"/>
</dbReference>
<dbReference type="FunFam" id="2.10.25.10:FF:000219">
    <property type="entry name" value="Pro-epidermal growth factor"/>
    <property type="match status" value="1"/>
</dbReference>
<dbReference type="FunFam" id="2.10.25.10:FF:000254">
    <property type="entry name" value="Pro-epidermal growth factor"/>
    <property type="match status" value="1"/>
</dbReference>
<dbReference type="FunFam" id="2.10.25.10:FF:000300">
    <property type="entry name" value="Pro-epidermal growth factor"/>
    <property type="match status" value="1"/>
</dbReference>
<dbReference type="FunFam" id="2.10.25.10:FF:000345">
    <property type="entry name" value="Pro-epidermal growth factor"/>
    <property type="match status" value="1"/>
</dbReference>
<dbReference type="FunFam" id="2.10.25.10:FF:000362">
    <property type="entry name" value="Pro-epidermal growth factor"/>
    <property type="match status" value="1"/>
</dbReference>
<dbReference type="FunFam" id="2.10.25.10:FF:000409">
    <property type="entry name" value="Pro-epidermal growth factor"/>
    <property type="match status" value="1"/>
</dbReference>
<dbReference type="FunFam" id="2.120.10.30:FF:000028">
    <property type="entry name" value="Pro-epidermal growth factor"/>
    <property type="match status" value="1"/>
</dbReference>
<dbReference type="FunFam" id="2.120.10.30:FF:000036">
    <property type="entry name" value="Pro-epidermal growth factor"/>
    <property type="match status" value="1"/>
</dbReference>
<dbReference type="Gene3D" id="2.10.25.10">
    <property type="entry name" value="Laminin"/>
    <property type="match status" value="7"/>
</dbReference>
<dbReference type="Gene3D" id="2.120.10.30">
    <property type="entry name" value="TolB, C-terminal domain"/>
    <property type="match status" value="2"/>
</dbReference>
<dbReference type="InterPro" id="IPR011042">
    <property type="entry name" value="6-blade_b-propeller_TolB-like"/>
</dbReference>
<dbReference type="InterPro" id="IPR026823">
    <property type="entry name" value="cEGF"/>
</dbReference>
<dbReference type="InterPro" id="IPR050778">
    <property type="entry name" value="Cueball_EGF_LRP_Nidogen"/>
</dbReference>
<dbReference type="InterPro" id="IPR001881">
    <property type="entry name" value="EGF-like_Ca-bd_dom"/>
</dbReference>
<dbReference type="InterPro" id="IPR000742">
    <property type="entry name" value="EGF-like_dom"/>
</dbReference>
<dbReference type="InterPro" id="IPR000152">
    <property type="entry name" value="EGF-type_Asp/Asn_hydroxyl_site"/>
</dbReference>
<dbReference type="InterPro" id="IPR018097">
    <property type="entry name" value="EGF_Ca-bd_CS"/>
</dbReference>
<dbReference type="InterPro" id="IPR009030">
    <property type="entry name" value="Growth_fac_rcpt_cys_sf"/>
</dbReference>
<dbReference type="InterPro" id="IPR000033">
    <property type="entry name" value="LDLR_classB_rpt"/>
</dbReference>
<dbReference type="InterPro" id="IPR049883">
    <property type="entry name" value="NOTCH1_EGF-like"/>
</dbReference>
<dbReference type="InterPro" id="IPR016317">
    <property type="entry name" value="Pro-epidermal_GF"/>
</dbReference>
<dbReference type="PANTHER" id="PTHR46513:SF5">
    <property type="entry name" value="PRO-EPIDERMAL GROWTH FACTOR"/>
    <property type="match status" value="1"/>
</dbReference>
<dbReference type="PANTHER" id="PTHR46513">
    <property type="entry name" value="VITELLOGENIN RECEPTOR-LIKE PROTEIN-RELATED-RELATED"/>
    <property type="match status" value="1"/>
</dbReference>
<dbReference type="Pfam" id="PF12662">
    <property type="entry name" value="cEGF"/>
    <property type="match status" value="2"/>
</dbReference>
<dbReference type="Pfam" id="PF07645">
    <property type="entry name" value="EGF_CA"/>
    <property type="match status" value="2"/>
</dbReference>
<dbReference type="Pfam" id="PF14670">
    <property type="entry name" value="FXa_inhibition"/>
    <property type="match status" value="1"/>
</dbReference>
<dbReference type="Pfam" id="PF00058">
    <property type="entry name" value="Ldl_recept_b"/>
    <property type="match status" value="4"/>
</dbReference>
<dbReference type="PIRSF" id="PIRSF001778">
    <property type="entry name" value="Pro-epidermal_growth_factor"/>
    <property type="match status" value="1"/>
</dbReference>
<dbReference type="PRINTS" id="PR00009">
    <property type="entry name" value="EGFTGF"/>
</dbReference>
<dbReference type="SMART" id="SM00181">
    <property type="entry name" value="EGF"/>
    <property type="match status" value="9"/>
</dbReference>
<dbReference type="SMART" id="SM00179">
    <property type="entry name" value="EGF_CA"/>
    <property type="match status" value="7"/>
</dbReference>
<dbReference type="SMART" id="SM00135">
    <property type="entry name" value="LY"/>
    <property type="match status" value="10"/>
</dbReference>
<dbReference type="SUPFAM" id="SSF57196">
    <property type="entry name" value="EGF/Laminin"/>
    <property type="match status" value="2"/>
</dbReference>
<dbReference type="SUPFAM" id="SSF57184">
    <property type="entry name" value="Growth factor receptor domain"/>
    <property type="match status" value="3"/>
</dbReference>
<dbReference type="SUPFAM" id="SSF63825">
    <property type="entry name" value="YWTD domain"/>
    <property type="match status" value="2"/>
</dbReference>
<dbReference type="PROSITE" id="PS00010">
    <property type="entry name" value="ASX_HYDROXYL"/>
    <property type="match status" value="2"/>
</dbReference>
<dbReference type="PROSITE" id="PS00022">
    <property type="entry name" value="EGF_1"/>
    <property type="match status" value="1"/>
</dbReference>
<dbReference type="PROSITE" id="PS01186">
    <property type="entry name" value="EGF_2"/>
    <property type="match status" value="7"/>
</dbReference>
<dbReference type="PROSITE" id="PS50026">
    <property type="entry name" value="EGF_3"/>
    <property type="match status" value="5"/>
</dbReference>
<dbReference type="PROSITE" id="PS01187">
    <property type="entry name" value="EGF_CA"/>
    <property type="match status" value="2"/>
</dbReference>
<dbReference type="PROSITE" id="PS51120">
    <property type="entry name" value="LDLRB"/>
    <property type="match status" value="9"/>
</dbReference>
<accession>Q00968</accession>
<accession>O62759</accession>
<accession>Q9BDQ0</accession>